<organism>
    <name type="scientific">Mus musculus</name>
    <name type="common">Mouse</name>
    <dbReference type="NCBI Taxonomy" id="10090"/>
    <lineage>
        <taxon>Eukaryota</taxon>
        <taxon>Metazoa</taxon>
        <taxon>Chordata</taxon>
        <taxon>Craniata</taxon>
        <taxon>Vertebrata</taxon>
        <taxon>Euteleostomi</taxon>
        <taxon>Mammalia</taxon>
        <taxon>Eutheria</taxon>
        <taxon>Euarchontoglires</taxon>
        <taxon>Glires</taxon>
        <taxon>Rodentia</taxon>
        <taxon>Myomorpha</taxon>
        <taxon>Muroidea</taxon>
        <taxon>Muridae</taxon>
        <taxon>Murinae</taxon>
        <taxon>Mus</taxon>
        <taxon>Mus</taxon>
    </lineage>
</organism>
<comment type="function">
    <text evidence="1 3">Involved in nonsense-mediated decay (NMD) of mRNAs containing premature stop codons. Is recruited by release factors to stalled ribosomes together with SMG1 and SMG8 (forming the SMG1C protein kinase complex) and, in the SMG1C complex, is required for the efficient association between SMG1 and SMG8 (By similarity). Plays a role in brain, heart, and eye development (PubMed:27018474).</text>
</comment>
<comment type="subunit">
    <text evidence="1">Self-associates to form homodimers and forms heterodimers with SMG8; these assembly forms may represent SMG1C intermediate forms (By similarity). Component of the SMG1C complex composed of SMG1, SMG8 and SMG9 (By similarity). Interacts with DHX34; the interaction is RNA-independent (By similarity).</text>
</comment>
<comment type="alternative products">
    <event type="alternative splicing"/>
    <isoform>
        <id>Q9DB90-1</id>
        <name>1</name>
        <sequence type="displayed"/>
    </isoform>
    <isoform>
        <id>Q9DB90-2</id>
        <name>2</name>
        <sequence type="described" ref="VSP_025947"/>
    </isoform>
</comment>
<comment type="PTM">
    <text evidence="1">Phosphorylated by SMG1.</text>
</comment>
<comment type="disruption phenotype">
    <text evidence="3">Embryonic lethal. Homozygous null embryos show a range of abnormalities, including edema, hemorrhage, exencephaly, preaxial polydactyly, decreased size of the mid- and hindbrains, microphthalmia, thin myocardium, and cardiac septal defects. These phenotypes are variable among mutant embryos; there is evidence of incomplete penetrance, but most embryos show clear phenotypic abnormalities.</text>
</comment>
<comment type="similarity">
    <text evidence="5">Belongs to the SMG9 family.</text>
</comment>
<sequence length="520" mass="57621">MSESGHSQPGLYGIERRRRWKEPGSSGPQNLSGPGGRERDYIAPWERERRDGSEDPSTNVMQKTPIILSKPPAERSKQPPPSTAPAAPPAPAPLEKPIVLMKPREEGKGPVAGTGASTPEGTAPPPPTAPAPPKGEKEGQRPTQPVYQIQNRGMGTAAPTAMDPVVGQAKLLPPERMKHSIKLVDDQMNWCDSAIEYLLDQTDVLVVGVLGLQGTGKSMVMSLLSANTPEEDQRAYVFRAQSAEMKERGGNQTSGIDFFITQERIVFLDTQPILSPSILDHLINNDRKLPPEYNLPHTYVEMQSLQIAAFLFTVCHVVIVVQDWFTDLSLYRFLQTAEMVKPSTPSPSHESSSSAGSDEGTEYYPHLVFLQNKARREDFCPRKLRQMHLMIDQLMAHSHLRYKGTLSMLQCNVFPGLPPDFLDAEVNLFLVPFMDSEAENENPPRAGPGSSPLFSLLPGYRGHPSFQSLVSKLRSQVMSMARPQLSHTILTEKNWFHYAARIWDGVKKSSALAEYSRLLA</sequence>
<protein>
    <recommendedName>
        <fullName evidence="6">Nonsense-mediated mRNA decay factor SMG9</fullName>
    </recommendedName>
</protein>
<gene>
    <name evidence="6" type="primary">Smg9</name>
</gene>
<accession>Q9DB90</accession>
<accession>Q3TTB9</accession>
<accession>Q8BYJ3</accession>
<keyword id="KW-0007">Acetylation</keyword>
<keyword id="KW-0025">Alternative splicing</keyword>
<keyword id="KW-0866">Nonsense-mediated mRNA decay</keyword>
<keyword id="KW-0597">Phosphoprotein</keyword>
<keyword id="KW-1185">Reference proteome</keyword>
<evidence type="ECO:0000250" key="1">
    <source>
        <dbReference type="UniProtKB" id="Q9H0W8"/>
    </source>
</evidence>
<evidence type="ECO:0000256" key="2">
    <source>
        <dbReference type="SAM" id="MobiDB-lite"/>
    </source>
</evidence>
<evidence type="ECO:0000269" key="3">
    <source>
    </source>
</evidence>
<evidence type="ECO:0000303" key="4">
    <source>
    </source>
</evidence>
<evidence type="ECO:0000305" key="5"/>
<evidence type="ECO:0000312" key="6">
    <source>
        <dbReference type="MGI" id="MGI:1919247"/>
    </source>
</evidence>
<evidence type="ECO:0007744" key="7">
    <source>
    </source>
</evidence>
<feature type="initiator methionine" description="Removed" evidence="1">
    <location>
        <position position="1"/>
    </location>
</feature>
<feature type="chain" id="PRO_0000289164" description="Nonsense-mediated mRNA decay factor SMG9">
    <location>
        <begin position="2"/>
        <end position="520"/>
    </location>
</feature>
<feature type="region of interest" description="Disordered" evidence="2">
    <location>
        <begin position="1"/>
        <end position="143"/>
    </location>
</feature>
<feature type="compositionally biased region" description="Basic and acidic residues" evidence="2">
    <location>
        <begin position="36"/>
        <end position="53"/>
    </location>
</feature>
<feature type="compositionally biased region" description="Pro residues" evidence="2">
    <location>
        <begin position="78"/>
        <end position="94"/>
    </location>
</feature>
<feature type="compositionally biased region" description="Pro residues" evidence="2">
    <location>
        <begin position="122"/>
        <end position="133"/>
    </location>
</feature>
<feature type="modified residue" description="N-acetylserine" evidence="1">
    <location>
        <position position="2"/>
    </location>
</feature>
<feature type="modified residue" description="Phosphoserine" evidence="1">
    <location>
        <position position="2"/>
    </location>
</feature>
<feature type="modified residue" description="Phosphoserine" evidence="1">
    <location>
        <position position="4"/>
    </location>
</feature>
<feature type="modified residue" description="Phosphoserine" evidence="1">
    <location>
        <position position="7"/>
    </location>
</feature>
<feature type="modified residue" description="Phosphoserine" evidence="7">
    <location>
        <position position="32"/>
    </location>
</feature>
<feature type="modified residue" description="Phosphoserine" evidence="1">
    <location>
        <position position="53"/>
    </location>
</feature>
<feature type="modified residue" description="Phosphoserine" evidence="7">
    <location>
        <position position="451"/>
    </location>
</feature>
<feature type="splice variant" id="VSP_025947" description="In isoform 2." evidence="4">
    <location>
        <begin position="235"/>
        <end position="520"/>
    </location>
</feature>
<feature type="sequence conflict" description="In Ref. 1; BAC30328." evidence="5" ref="1">
    <original>E</original>
    <variation>G</variation>
    <location>
        <position position="492"/>
    </location>
</feature>
<name>SMG9_MOUSE</name>
<reference key="1">
    <citation type="journal article" date="2005" name="Science">
        <title>The transcriptional landscape of the mammalian genome.</title>
        <authorList>
            <person name="Carninci P."/>
            <person name="Kasukawa T."/>
            <person name="Katayama S."/>
            <person name="Gough J."/>
            <person name="Frith M.C."/>
            <person name="Maeda N."/>
            <person name="Oyama R."/>
            <person name="Ravasi T."/>
            <person name="Lenhard B."/>
            <person name="Wells C."/>
            <person name="Kodzius R."/>
            <person name="Shimokawa K."/>
            <person name="Bajic V.B."/>
            <person name="Brenner S.E."/>
            <person name="Batalov S."/>
            <person name="Forrest A.R."/>
            <person name="Zavolan M."/>
            <person name="Davis M.J."/>
            <person name="Wilming L.G."/>
            <person name="Aidinis V."/>
            <person name="Allen J.E."/>
            <person name="Ambesi-Impiombato A."/>
            <person name="Apweiler R."/>
            <person name="Aturaliya R.N."/>
            <person name="Bailey T.L."/>
            <person name="Bansal M."/>
            <person name="Baxter L."/>
            <person name="Beisel K.W."/>
            <person name="Bersano T."/>
            <person name="Bono H."/>
            <person name="Chalk A.M."/>
            <person name="Chiu K.P."/>
            <person name="Choudhary V."/>
            <person name="Christoffels A."/>
            <person name="Clutterbuck D.R."/>
            <person name="Crowe M.L."/>
            <person name="Dalla E."/>
            <person name="Dalrymple B.P."/>
            <person name="de Bono B."/>
            <person name="Della Gatta G."/>
            <person name="di Bernardo D."/>
            <person name="Down T."/>
            <person name="Engstrom P."/>
            <person name="Fagiolini M."/>
            <person name="Faulkner G."/>
            <person name="Fletcher C.F."/>
            <person name="Fukushima T."/>
            <person name="Furuno M."/>
            <person name="Futaki S."/>
            <person name="Gariboldi M."/>
            <person name="Georgii-Hemming P."/>
            <person name="Gingeras T.R."/>
            <person name="Gojobori T."/>
            <person name="Green R.E."/>
            <person name="Gustincich S."/>
            <person name="Harbers M."/>
            <person name="Hayashi Y."/>
            <person name="Hensch T.K."/>
            <person name="Hirokawa N."/>
            <person name="Hill D."/>
            <person name="Huminiecki L."/>
            <person name="Iacono M."/>
            <person name="Ikeo K."/>
            <person name="Iwama A."/>
            <person name="Ishikawa T."/>
            <person name="Jakt M."/>
            <person name="Kanapin A."/>
            <person name="Katoh M."/>
            <person name="Kawasawa Y."/>
            <person name="Kelso J."/>
            <person name="Kitamura H."/>
            <person name="Kitano H."/>
            <person name="Kollias G."/>
            <person name="Krishnan S.P."/>
            <person name="Kruger A."/>
            <person name="Kummerfeld S.K."/>
            <person name="Kurochkin I.V."/>
            <person name="Lareau L.F."/>
            <person name="Lazarevic D."/>
            <person name="Lipovich L."/>
            <person name="Liu J."/>
            <person name="Liuni S."/>
            <person name="McWilliam S."/>
            <person name="Madan Babu M."/>
            <person name="Madera M."/>
            <person name="Marchionni L."/>
            <person name="Matsuda H."/>
            <person name="Matsuzawa S."/>
            <person name="Miki H."/>
            <person name="Mignone F."/>
            <person name="Miyake S."/>
            <person name="Morris K."/>
            <person name="Mottagui-Tabar S."/>
            <person name="Mulder N."/>
            <person name="Nakano N."/>
            <person name="Nakauchi H."/>
            <person name="Ng P."/>
            <person name="Nilsson R."/>
            <person name="Nishiguchi S."/>
            <person name="Nishikawa S."/>
            <person name="Nori F."/>
            <person name="Ohara O."/>
            <person name="Okazaki Y."/>
            <person name="Orlando V."/>
            <person name="Pang K.C."/>
            <person name="Pavan W.J."/>
            <person name="Pavesi G."/>
            <person name="Pesole G."/>
            <person name="Petrovsky N."/>
            <person name="Piazza S."/>
            <person name="Reed J."/>
            <person name="Reid J.F."/>
            <person name="Ring B.Z."/>
            <person name="Ringwald M."/>
            <person name="Rost B."/>
            <person name="Ruan Y."/>
            <person name="Salzberg S.L."/>
            <person name="Sandelin A."/>
            <person name="Schneider C."/>
            <person name="Schoenbach C."/>
            <person name="Sekiguchi K."/>
            <person name="Semple C.A."/>
            <person name="Seno S."/>
            <person name="Sessa L."/>
            <person name="Sheng Y."/>
            <person name="Shibata Y."/>
            <person name="Shimada H."/>
            <person name="Shimada K."/>
            <person name="Silva D."/>
            <person name="Sinclair B."/>
            <person name="Sperling S."/>
            <person name="Stupka E."/>
            <person name="Sugiura K."/>
            <person name="Sultana R."/>
            <person name="Takenaka Y."/>
            <person name="Taki K."/>
            <person name="Tammoja K."/>
            <person name="Tan S.L."/>
            <person name="Tang S."/>
            <person name="Taylor M.S."/>
            <person name="Tegner J."/>
            <person name="Teichmann S.A."/>
            <person name="Ueda H.R."/>
            <person name="van Nimwegen E."/>
            <person name="Verardo R."/>
            <person name="Wei C.L."/>
            <person name="Yagi K."/>
            <person name="Yamanishi H."/>
            <person name="Zabarovsky E."/>
            <person name="Zhu S."/>
            <person name="Zimmer A."/>
            <person name="Hide W."/>
            <person name="Bult C."/>
            <person name="Grimmond S.M."/>
            <person name="Teasdale R.D."/>
            <person name="Liu E.T."/>
            <person name="Brusic V."/>
            <person name="Quackenbush J."/>
            <person name="Wahlestedt C."/>
            <person name="Mattick J.S."/>
            <person name="Hume D.A."/>
            <person name="Kai C."/>
            <person name="Sasaki D."/>
            <person name="Tomaru Y."/>
            <person name="Fukuda S."/>
            <person name="Kanamori-Katayama M."/>
            <person name="Suzuki M."/>
            <person name="Aoki J."/>
            <person name="Arakawa T."/>
            <person name="Iida J."/>
            <person name="Imamura K."/>
            <person name="Itoh M."/>
            <person name="Kato T."/>
            <person name="Kawaji H."/>
            <person name="Kawagashira N."/>
            <person name="Kawashima T."/>
            <person name="Kojima M."/>
            <person name="Kondo S."/>
            <person name="Konno H."/>
            <person name="Nakano K."/>
            <person name="Ninomiya N."/>
            <person name="Nishio T."/>
            <person name="Okada M."/>
            <person name="Plessy C."/>
            <person name="Shibata K."/>
            <person name="Shiraki T."/>
            <person name="Suzuki S."/>
            <person name="Tagami M."/>
            <person name="Waki K."/>
            <person name="Watahiki A."/>
            <person name="Okamura-Oho Y."/>
            <person name="Suzuki H."/>
            <person name="Kawai J."/>
            <person name="Hayashizaki Y."/>
        </authorList>
    </citation>
    <scope>NUCLEOTIDE SEQUENCE [LARGE SCALE MRNA] (ISOFORMS 1 AND 2)</scope>
    <source>
        <strain>C57BL/6J</strain>
        <strain>NOD</strain>
        <tissue>Cerebellum</tissue>
        <tissue>Hippocampus</tissue>
        <tissue>Spinal cord</tissue>
        <tissue>Testis</tissue>
        <tissue>Thymus</tissue>
    </source>
</reference>
<reference key="2">
    <citation type="journal article" date="2004" name="Genome Res.">
        <title>The status, quality, and expansion of the NIH full-length cDNA project: the Mammalian Gene Collection (MGC).</title>
        <authorList>
            <consortium name="The MGC Project Team"/>
        </authorList>
    </citation>
    <scope>NUCLEOTIDE SEQUENCE [LARGE SCALE MRNA] (ISOFORM 1)</scope>
    <source>
        <strain>FVB/N</strain>
        <tissue>Colon</tissue>
    </source>
</reference>
<reference key="3">
    <citation type="journal article" date="2010" name="Cell">
        <title>A tissue-specific atlas of mouse protein phosphorylation and expression.</title>
        <authorList>
            <person name="Huttlin E.L."/>
            <person name="Jedrychowski M.P."/>
            <person name="Elias J.E."/>
            <person name="Goswami T."/>
            <person name="Rad R."/>
            <person name="Beausoleil S.A."/>
            <person name="Villen J."/>
            <person name="Haas W."/>
            <person name="Sowa M.E."/>
            <person name="Gygi S.P."/>
        </authorList>
    </citation>
    <scope>PHOSPHORYLATION [LARGE SCALE ANALYSIS] AT SER-32 AND SER-451</scope>
    <scope>IDENTIFICATION BY MASS SPECTROMETRY [LARGE SCALE ANALYSIS]</scope>
    <source>
        <tissue>Brown adipose tissue</tissue>
        <tissue>Heart</tissue>
        <tissue>Kidney</tissue>
        <tissue>Lung</tissue>
        <tissue>Spleen</tissue>
        <tissue>Testis</tissue>
    </source>
</reference>
<reference key="4">
    <citation type="journal article" date="2016" name="Am. J. Hum. Genet.">
        <title>Mutations in SMG9, Encoding an Essential Component of Nonsense-Mediated Decay Machinery, Cause a multiple congenital anomaly syndrome in humans and mice.</title>
        <authorList>
            <person name="Shaheen R."/>
            <person name="Anazi S."/>
            <person name="Ben-Omran T."/>
            <person name="Seidahmed M.Z."/>
            <person name="Caddle L.B."/>
            <person name="Palmer K."/>
            <person name="Ali R."/>
            <person name="Alshidi T."/>
            <person name="Hagos S."/>
            <person name="Goodwin L."/>
            <person name="Hashem M."/>
            <person name="Wakil S.M."/>
            <person name="Abouelhoda M."/>
            <person name="Colak D."/>
            <person name="Murray S.A."/>
            <person name="Alkuraya F.S."/>
        </authorList>
    </citation>
    <scope>FUNCTION</scope>
    <scope>DISRUPTION PHENOTYPE</scope>
</reference>
<proteinExistence type="evidence at protein level"/>
<dbReference type="EMBL" id="AK005126">
    <property type="protein sequence ID" value="BAB23829.1"/>
    <property type="molecule type" value="mRNA"/>
</dbReference>
<dbReference type="EMBL" id="AK039368">
    <property type="protein sequence ID" value="BAC30328.1"/>
    <property type="molecule type" value="mRNA"/>
</dbReference>
<dbReference type="EMBL" id="AK141576">
    <property type="protein sequence ID" value="BAE24745.1"/>
    <property type="molecule type" value="mRNA"/>
</dbReference>
<dbReference type="EMBL" id="AK161454">
    <property type="protein sequence ID" value="BAE36406.1"/>
    <property type="molecule type" value="mRNA"/>
</dbReference>
<dbReference type="EMBL" id="AK169651">
    <property type="protein sequence ID" value="BAE41275.1"/>
    <property type="molecule type" value="mRNA"/>
</dbReference>
<dbReference type="EMBL" id="BC034211">
    <property type="protein sequence ID" value="AAH34211.1"/>
    <property type="molecule type" value="mRNA"/>
</dbReference>
<dbReference type="CCDS" id="CCDS20949.1">
    <molecule id="Q9DB90-1"/>
</dbReference>
<dbReference type="RefSeq" id="NP_001405883.1">
    <molecule id="Q9DB90-1"/>
    <property type="nucleotide sequence ID" value="NM_001418954.1"/>
</dbReference>
<dbReference type="RefSeq" id="NP_082323.1">
    <molecule id="Q9DB90-1"/>
    <property type="nucleotide sequence ID" value="NM_028047.3"/>
</dbReference>
<dbReference type="RefSeq" id="XP_006540440.1">
    <property type="nucleotide sequence ID" value="XM_006540377.1"/>
</dbReference>
<dbReference type="SMR" id="Q9DB90"/>
<dbReference type="BioGRID" id="215084">
    <property type="interactions" value="1"/>
</dbReference>
<dbReference type="FunCoup" id="Q9DB90">
    <property type="interactions" value="1734"/>
</dbReference>
<dbReference type="STRING" id="10090.ENSMUSP00000002280"/>
<dbReference type="GlyGen" id="Q9DB90">
    <property type="glycosylation" value="2 sites, 1 N-linked glycan (1 site)"/>
</dbReference>
<dbReference type="iPTMnet" id="Q9DB90"/>
<dbReference type="PhosphoSitePlus" id="Q9DB90"/>
<dbReference type="SwissPalm" id="Q9DB90"/>
<dbReference type="jPOST" id="Q9DB90"/>
<dbReference type="PaxDb" id="10090-ENSMUSP00000002280"/>
<dbReference type="PeptideAtlas" id="Q9DB90"/>
<dbReference type="ProteomicsDB" id="261263">
    <molecule id="Q9DB90-1"/>
</dbReference>
<dbReference type="ProteomicsDB" id="261264">
    <molecule id="Q9DB90-2"/>
</dbReference>
<dbReference type="Pumba" id="Q9DB90"/>
<dbReference type="Antibodypedia" id="31101">
    <property type="antibodies" value="60 antibodies from 20 providers"/>
</dbReference>
<dbReference type="Ensembl" id="ENSMUST00000002280.11">
    <molecule id="Q9DB90-1"/>
    <property type="protein sequence ID" value="ENSMUSP00000002280.5"/>
    <property type="gene ID" value="ENSMUSG00000002210.12"/>
</dbReference>
<dbReference type="GeneID" id="71997"/>
<dbReference type="KEGG" id="mmu:71997"/>
<dbReference type="UCSC" id="uc009fpm.1">
    <molecule id="Q9DB90-2"/>
    <property type="organism name" value="mouse"/>
</dbReference>
<dbReference type="UCSC" id="uc009fpn.1">
    <molecule id="Q9DB90-1"/>
    <property type="organism name" value="mouse"/>
</dbReference>
<dbReference type="AGR" id="MGI:1919247"/>
<dbReference type="CTD" id="56006"/>
<dbReference type="MGI" id="MGI:1919247">
    <property type="gene designation" value="Smg9"/>
</dbReference>
<dbReference type="VEuPathDB" id="HostDB:ENSMUSG00000002210"/>
<dbReference type="eggNOG" id="KOG4181">
    <property type="taxonomic scope" value="Eukaryota"/>
</dbReference>
<dbReference type="GeneTree" id="ENSGT00390000003568"/>
<dbReference type="HOGENOM" id="CLU_037795_0_0_1"/>
<dbReference type="InParanoid" id="Q9DB90"/>
<dbReference type="OMA" id="SEYYPHL"/>
<dbReference type="OrthoDB" id="61574at9989"/>
<dbReference type="PhylomeDB" id="Q9DB90"/>
<dbReference type="TreeFam" id="TF319763"/>
<dbReference type="Reactome" id="R-MMU-975957">
    <property type="pathway name" value="Nonsense Mediated Decay (NMD) enhanced by the Exon Junction Complex (EJC)"/>
</dbReference>
<dbReference type="BioGRID-ORCS" id="71997">
    <property type="hits" value="15 hits in 83 CRISPR screens"/>
</dbReference>
<dbReference type="PRO" id="PR:Q9DB90"/>
<dbReference type="Proteomes" id="UP000000589">
    <property type="component" value="Chromosome 7"/>
</dbReference>
<dbReference type="RNAct" id="Q9DB90">
    <property type="molecule type" value="protein"/>
</dbReference>
<dbReference type="Bgee" id="ENSMUSG00000002210">
    <property type="expression patterns" value="Expressed in granulocyte and 208 other cell types or tissues"/>
</dbReference>
<dbReference type="ExpressionAtlas" id="Q9DB90">
    <property type="expression patterns" value="baseline and differential"/>
</dbReference>
<dbReference type="GO" id="GO:0042802">
    <property type="term" value="F:identical protein binding"/>
    <property type="evidence" value="ECO:0007669"/>
    <property type="project" value="Ensembl"/>
</dbReference>
<dbReference type="GO" id="GO:0007420">
    <property type="term" value="P:brain development"/>
    <property type="evidence" value="ECO:0000315"/>
    <property type="project" value="UniProtKB"/>
</dbReference>
<dbReference type="GO" id="GO:0001654">
    <property type="term" value="P:eye development"/>
    <property type="evidence" value="ECO:0000315"/>
    <property type="project" value="UniProtKB"/>
</dbReference>
<dbReference type="GO" id="GO:0007507">
    <property type="term" value="P:heart development"/>
    <property type="evidence" value="ECO:0000315"/>
    <property type="project" value="UniProtKB"/>
</dbReference>
<dbReference type="GO" id="GO:0001701">
    <property type="term" value="P:in utero embryonic development"/>
    <property type="evidence" value="ECO:0000315"/>
    <property type="project" value="MGI"/>
</dbReference>
<dbReference type="GO" id="GO:0000184">
    <property type="term" value="P:nuclear-transcribed mRNA catabolic process, nonsense-mediated decay"/>
    <property type="evidence" value="ECO:0000250"/>
    <property type="project" value="UniProtKB"/>
</dbReference>
<dbReference type="FunFam" id="3.40.50.300:FF:001272">
    <property type="entry name" value="SMG9 isoform 2"/>
    <property type="match status" value="1"/>
</dbReference>
<dbReference type="Gene3D" id="3.40.50.300">
    <property type="entry name" value="P-loop containing nucleotide triphosphate hydrolases"/>
    <property type="match status" value="1"/>
</dbReference>
<dbReference type="InterPro" id="IPR027417">
    <property type="entry name" value="P-loop_NTPase"/>
</dbReference>
<dbReference type="InterPro" id="IPR039177">
    <property type="entry name" value="SMG9"/>
</dbReference>
<dbReference type="PANTHER" id="PTHR14270">
    <property type="entry name" value="NONSENSE-MEDIATED MRNA DECAY FACTOR SMG9"/>
    <property type="match status" value="1"/>
</dbReference>
<dbReference type="PANTHER" id="PTHR14270:SF0">
    <property type="entry name" value="NONSENSE-MEDIATED MRNA DECAY FACTOR SMG9"/>
    <property type="match status" value="1"/>
</dbReference>